<name>LPXC_BURA4</name>
<gene>
    <name evidence="1" type="primary">lpxC</name>
    <name type="ordered locus">BamMC406_0495</name>
</gene>
<accession>B1YST1</accession>
<proteinExistence type="inferred from homology"/>
<feature type="chain" id="PRO_1000122765" description="UDP-3-O-acyl-N-acetylglucosamine deacetylase">
    <location>
        <begin position="1"/>
        <end position="305"/>
    </location>
</feature>
<feature type="active site" description="Proton donor" evidence="1">
    <location>
        <position position="264"/>
    </location>
</feature>
<feature type="binding site" evidence="1">
    <location>
        <position position="78"/>
    </location>
    <ligand>
        <name>Zn(2+)</name>
        <dbReference type="ChEBI" id="CHEBI:29105"/>
    </ligand>
</feature>
<feature type="binding site" evidence="1">
    <location>
        <position position="237"/>
    </location>
    <ligand>
        <name>Zn(2+)</name>
        <dbReference type="ChEBI" id="CHEBI:29105"/>
    </ligand>
</feature>
<feature type="binding site" evidence="1">
    <location>
        <position position="241"/>
    </location>
    <ligand>
        <name>Zn(2+)</name>
        <dbReference type="ChEBI" id="CHEBI:29105"/>
    </ligand>
</feature>
<evidence type="ECO:0000255" key="1">
    <source>
        <dbReference type="HAMAP-Rule" id="MF_00388"/>
    </source>
</evidence>
<organism>
    <name type="scientific">Burkholderia ambifaria (strain MC40-6)</name>
    <dbReference type="NCBI Taxonomy" id="398577"/>
    <lineage>
        <taxon>Bacteria</taxon>
        <taxon>Pseudomonadati</taxon>
        <taxon>Pseudomonadota</taxon>
        <taxon>Betaproteobacteria</taxon>
        <taxon>Burkholderiales</taxon>
        <taxon>Burkholderiaceae</taxon>
        <taxon>Burkholderia</taxon>
        <taxon>Burkholderia cepacia complex</taxon>
    </lineage>
</organism>
<dbReference type="EC" id="3.5.1.108" evidence="1"/>
<dbReference type="EMBL" id="CP001025">
    <property type="protein sequence ID" value="ACB62992.1"/>
    <property type="molecule type" value="Genomic_DNA"/>
</dbReference>
<dbReference type="RefSeq" id="WP_012363030.1">
    <property type="nucleotide sequence ID" value="NC_010551.1"/>
</dbReference>
<dbReference type="SMR" id="B1YST1"/>
<dbReference type="KEGG" id="bac:BamMC406_0495"/>
<dbReference type="HOGENOM" id="CLU_046528_1_0_4"/>
<dbReference type="OrthoDB" id="9802746at2"/>
<dbReference type="UniPathway" id="UPA00359">
    <property type="reaction ID" value="UER00478"/>
</dbReference>
<dbReference type="Proteomes" id="UP000001680">
    <property type="component" value="Chromosome 1"/>
</dbReference>
<dbReference type="GO" id="GO:0016020">
    <property type="term" value="C:membrane"/>
    <property type="evidence" value="ECO:0007669"/>
    <property type="project" value="GOC"/>
</dbReference>
<dbReference type="GO" id="GO:0046872">
    <property type="term" value="F:metal ion binding"/>
    <property type="evidence" value="ECO:0007669"/>
    <property type="project" value="UniProtKB-KW"/>
</dbReference>
<dbReference type="GO" id="GO:0103117">
    <property type="term" value="F:UDP-3-O-acyl-N-acetylglucosamine deacetylase activity"/>
    <property type="evidence" value="ECO:0007669"/>
    <property type="project" value="UniProtKB-UniRule"/>
</dbReference>
<dbReference type="GO" id="GO:0009245">
    <property type="term" value="P:lipid A biosynthetic process"/>
    <property type="evidence" value="ECO:0007669"/>
    <property type="project" value="UniProtKB-UniRule"/>
</dbReference>
<dbReference type="Gene3D" id="3.30.230.20">
    <property type="entry name" value="lpxc deacetylase, domain 1"/>
    <property type="match status" value="1"/>
</dbReference>
<dbReference type="Gene3D" id="3.30.1700.10">
    <property type="entry name" value="lpxc deacetylase, domain 2"/>
    <property type="match status" value="1"/>
</dbReference>
<dbReference type="HAMAP" id="MF_00388">
    <property type="entry name" value="LpxC"/>
    <property type="match status" value="1"/>
</dbReference>
<dbReference type="InterPro" id="IPR020568">
    <property type="entry name" value="Ribosomal_Su5_D2-typ_SF"/>
</dbReference>
<dbReference type="InterPro" id="IPR004463">
    <property type="entry name" value="UDP-acyl_GlcNac_deAcase"/>
</dbReference>
<dbReference type="InterPro" id="IPR011334">
    <property type="entry name" value="UDP-acyl_GlcNac_deAcase_C"/>
</dbReference>
<dbReference type="InterPro" id="IPR015870">
    <property type="entry name" value="UDP-acyl_N-AcGlcN_deAcase_N"/>
</dbReference>
<dbReference type="NCBIfam" id="TIGR00325">
    <property type="entry name" value="lpxC"/>
    <property type="match status" value="1"/>
</dbReference>
<dbReference type="PANTHER" id="PTHR33694">
    <property type="entry name" value="UDP-3-O-ACYL-N-ACETYLGLUCOSAMINE DEACETYLASE 1, MITOCHONDRIAL-RELATED"/>
    <property type="match status" value="1"/>
</dbReference>
<dbReference type="PANTHER" id="PTHR33694:SF1">
    <property type="entry name" value="UDP-3-O-ACYL-N-ACETYLGLUCOSAMINE DEACETYLASE 1, MITOCHONDRIAL-RELATED"/>
    <property type="match status" value="1"/>
</dbReference>
<dbReference type="Pfam" id="PF03331">
    <property type="entry name" value="LpxC"/>
    <property type="match status" value="1"/>
</dbReference>
<dbReference type="SUPFAM" id="SSF54211">
    <property type="entry name" value="Ribosomal protein S5 domain 2-like"/>
    <property type="match status" value="2"/>
</dbReference>
<comment type="function">
    <text evidence="1">Catalyzes the hydrolysis of UDP-3-O-myristoyl-N-acetylglucosamine to form UDP-3-O-myristoylglucosamine and acetate, the committed step in lipid A biosynthesis.</text>
</comment>
<comment type="catalytic activity">
    <reaction evidence="1">
        <text>a UDP-3-O-[(3R)-3-hydroxyacyl]-N-acetyl-alpha-D-glucosamine + H2O = a UDP-3-O-[(3R)-3-hydroxyacyl]-alpha-D-glucosamine + acetate</text>
        <dbReference type="Rhea" id="RHEA:67816"/>
        <dbReference type="ChEBI" id="CHEBI:15377"/>
        <dbReference type="ChEBI" id="CHEBI:30089"/>
        <dbReference type="ChEBI" id="CHEBI:137740"/>
        <dbReference type="ChEBI" id="CHEBI:173225"/>
        <dbReference type="EC" id="3.5.1.108"/>
    </reaction>
</comment>
<comment type="cofactor">
    <cofactor evidence="1">
        <name>Zn(2+)</name>
        <dbReference type="ChEBI" id="CHEBI:29105"/>
    </cofactor>
</comment>
<comment type="pathway">
    <text evidence="1">Glycolipid biosynthesis; lipid IV(A) biosynthesis; lipid IV(A) from (3R)-3-hydroxytetradecanoyl-[acyl-carrier-protein] and UDP-N-acetyl-alpha-D-glucosamine: step 2/6.</text>
</comment>
<comment type="similarity">
    <text evidence="1">Belongs to the LpxC family.</text>
</comment>
<reference key="1">
    <citation type="submission" date="2008-04" db="EMBL/GenBank/DDBJ databases">
        <title>Complete sequence of chromosome 1 of Burkholderia ambifaria MC40-6.</title>
        <authorList>
            <person name="Copeland A."/>
            <person name="Lucas S."/>
            <person name="Lapidus A."/>
            <person name="Glavina del Rio T."/>
            <person name="Dalin E."/>
            <person name="Tice H."/>
            <person name="Pitluck S."/>
            <person name="Chain P."/>
            <person name="Malfatti S."/>
            <person name="Shin M."/>
            <person name="Vergez L."/>
            <person name="Lang D."/>
            <person name="Schmutz J."/>
            <person name="Larimer F."/>
            <person name="Land M."/>
            <person name="Hauser L."/>
            <person name="Kyrpides N."/>
            <person name="Lykidis A."/>
            <person name="Ramette A."/>
            <person name="Konstantinidis K."/>
            <person name="Tiedje J."/>
            <person name="Richardson P."/>
        </authorList>
    </citation>
    <scope>NUCLEOTIDE SEQUENCE [LARGE SCALE GENOMIC DNA]</scope>
    <source>
        <strain>MC40-6</strain>
    </source>
</reference>
<sequence>MLKQRTIKSIVKTVGIGLHSGRKIELTLRPAAPGTGIVFSRIDLPTPVDIPASAMSIGDTRLASVLQKDGARVSTVEHLMSACAGLGIDNLYVDVTAEEIPIMDGSAATFVFLIQSAGIEEQNAPKRFIKVTKPVEIRDGDKFARLDPYFGFKLKFSIDFRHPAVDKTGQELEVDFANTSYVREIARARTFGFAHEAEMLRELGLARGGSMDNAIVLDEYRILNNDGLRYDDEFVKHKMLDAIGDLYVVGHPLLASYTAYKSGHGLNNALLRELLAHEDAYEIVTFDDPQAAPKGFAFDAQTAFA</sequence>
<protein>
    <recommendedName>
        <fullName evidence="1">UDP-3-O-acyl-N-acetylglucosamine deacetylase</fullName>
        <shortName evidence="1">UDP-3-O-acyl-GlcNAc deacetylase</shortName>
        <ecNumber evidence="1">3.5.1.108</ecNumber>
    </recommendedName>
    <alternativeName>
        <fullName evidence="1">UDP-3-O-[R-3-hydroxymyristoyl]-N-acetylglucosamine deacetylase</fullName>
    </alternativeName>
</protein>
<keyword id="KW-0378">Hydrolase</keyword>
<keyword id="KW-0441">Lipid A biosynthesis</keyword>
<keyword id="KW-0444">Lipid biosynthesis</keyword>
<keyword id="KW-0443">Lipid metabolism</keyword>
<keyword id="KW-0479">Metal-binding</keyword>
<keyword id="KW-0862">Zinc</keyword>